<keyword id="KW-0489">Methyltransferase</keyword>
<keyword id="KW-0694">RNA-binding</keyword>
<keyword id="KW-0949">S-adenosyl-L-methionine</keyword>
<keyword id="KW-0808">Transferase</keyword>
<keyword id="KW-0819">tRNA processing</keyword>
<keyword id="KW-0820">tRNA-binding</keyword>
<comment type="function">
    <text evidence="1">Dimethylates a single guanine residue at position 26 of a number of tRNAs using S-adenosyl-L-methionine as donor of the methyl groups.</text>
</comment>
<comment type="catalytic activity">
    <reaction evidence="1">
        <text>guanosine(26) in tRNA + 2 S-adenosyl-L-methionine = N(2)-dimethylguanosine(26) in tRNA + 2 S-adenosyl-L-homocysteine + 2 H(+)</text>
        <dbReference type="Rhea" id="RHEA:43140"/>
        <dbReference type="Rhea" id="RHEA-COMP:10359"/>
        <dbReference type="Rhea" id="RHEA-COMP:10360"/>
        <dbReference type="ChEBI" id="CHEBI:15378"/>
        <dbReference type="ChEBI" id="CHEBI:57856"/>
        <dbReference type="ChEBI" id="CHEBI:59789"/>
        <dbReference type="ChEBI" id="CHEBI:74269"/>
        <dbReference type="ChEBI" id="CHEBI:74513"/>
        <dbReference type="EC" id="2.1.1.216"/>
    </reaction>
</comment>
<comment type="similarity">
    <text evidence="1">Belongs to the class I-like SAM-binding methyltransferase superfamily. Trm1 family.</text>
</comment>
<dbReference type="EC" id="2.1.1.216" evidence="1"/>
<dbReference type="EMBL" id="CP000660">
    <property type="protein sequence ID" value="ABP51534.1"/>
    <property type="molecule type" value="Genomic_DNA"/>
</dbReference>
<dbReference type="SMR" id="A4WMB7"/>
<dbReference type="STRING" id="340102.Pars_1987"/>
<dbReference type="KEGG" id="pas:Pars_1987"/>
<dbReference type="HOGENOM" id="CLU_010862_5_1_2"/>
<dbReference type="OrthoDB" id="372177at2157"/>
<dbReference type="PhylomeDB" id="A4WMB7"/>
<dbReference type="Proteomes" id="UP000001567">
    <property type="component" value="Chromosome"/>
</dbReference>
<dbReference type="GO" id="GO:0160104">
    <property type="term" value="F:tRNA (guanine(26)-N2)-dimethyltransferase activity"/>
    <property type="evidence" value="ECO:0007669"/>
    <property type="project" value="UniProtKB-UniRule"/>
</dbReference>
<dbReference type="GO" id="GO:0000049">
    <property type="term" value="F:tRNA binding"/>
    <property type="evidence" value="ECO:0007669"/>
    <property type="project" value="UniProtKB-KW"/>
</dbReference>
<dbReference type="GO" id="GO:0002940">
    <property type="term" value="P:tRNA N2-guanine methylation"/>
    <property type="evidence" value="ECO:0007669"/>
    <property type="project" value="TreeGrafter"/>
</dbReference>
<dbReference type="CDD" id="cd02440">
    <property type="entry name" value="AdoMet_MTases"/>
    <property type="match status" value="1"/>
</dbReference>
<dbReference type="Gene3D" id="3.30.56.70">
    <property type="entry name" value="N2,N2-dimethylguanosine tRNA methyltransferase, C-terminal domain"/>
    <property type="match status" value="1"/>
</dbReference>
<dbReference type="Gene3D" id="3.40.50.150">
    <property type="entry name" value="Vaccinia Virus protein VP39"/>
    <property type="match status" value="1"/>
</dbReference>
<dbReference type="HAMAP" id="MF_00290">
    <property type="entry name" value="tRNA_dimethyltr_TRM1"/>
    <property type="match status" value="1"/>
</dbReference>
<dbReference type="InterPro" id="IPR029063">
    <property type="entry name" value="SAM-dependent_MTases_sf"/>
</dbReference>
<dbReference type="InterPro" id="IPR002905">
    <property type="entry name" value="Trm1"/>
</dbReference>
<dbReference type="InterPro" id="IPR022923">
    <property type="entry name" value="TRM1_arc_bac"/>
</dbReference>
<dbReference type="InterPro" id="IPR042296">
    <property type="entry name" value="tRNA_met_Trm1_C"/>
</dbReference>
<dbReference type="PANTHER" id="PTHR10631">
    <property type="entry name" value="N 2 ,N 2 -DIMETHYLGUANOSINE TRNA METHYLTRANSFERASE"/>
    <property type="match status" value="1"/>
</dbReference>
<dbReference type="PANTHER" id="PTHR10631:SF3">
    <property type="entry name" value="TRNA (GUANINE(26)-N(2))-DIMETHYLTRANSFERASE"/>
    <property type="match status" value="1"/>
</dbReference>
<dbReference type="Pfam" id="PF02005">
    <property type="entry name" value="TRM"/>
    <property type="match status" value="1"/>
</dbReference>
<dbReference type="SUPFAM" id="SSF53335">
    <property type="entry name" value="S-adenosyl-L-methionine-dependent methyltransferases"/>
    <property type="match status" value="1"/>
</dbReference>
<dbReference type="PROSITE" id="PS51626">
    <property type="entry name" value="SAM_MT_TRM1"/>
    <property type="match status" value="1"/>
</dbReference>
<gene>
    <name evidence="1" type="primary">trm1</name>
    <name type="ordered locus">Pars_1987</name>
</gene>
<protein>
    <recommendedName>
        <fullName evidence="1">tRNA (guanine(26)-N(2))-dimethyltransferase</fullName>
        <ecNumber evidence="1">2.1.1.216</ecNumber>
    </recommendedName>
    <alternativeName>
        <fullName evidence="1">tRNA 2,2-dimethylguanosine-26 methyltransferase</fullName>
    </alternativeName>
    <alternativeName>
        <fullName evidence="1">tRNA(guanine-26,N(2)-N(2)) methyltransferase</fullName>
    </alternativeName>
    <alternativeName>
        <fullName evidence="1">tRNA(m(2,2)G26)dimethyltransferase</fullName>
    </alternativeName>
</protein>
<feature type="chain" id="PRO_1000114980" description="tRNA (guanine(26)-N(2))-dimethyltransferase">
    <location>
        <begin position="1"/>
        <end position="356"/>
    </location>
</feature>
<feature type="domain" description="Trm1 methyltransferase" evidence="1">
    <location>
        <begin position="5"/>
        <end position="352"/>
    </location>
</feature>
<feature type="binding site" evidence="1">
    <location>
        <position position="40"/>
    </location>
    <ligand>
        <name>S-adenosyl-L-methionine</name>
        <dbReference type="ChEBI" id="CHEBI:59789"/>
    </ligand>
</feature>
<feature type="binding site" evidence="1">
    <location>
        <position position="67"/>
    </location>
    <ligand>
        <name>S-adenosyl-L-methionine</name>
        <dbReference type="ChEBI" id="CHEBI:59789"/>
    </ligand>
</feature>
<feature type="binding site" evidence="1">
    <location>
        <position position="85"/>
    </location>
    <ligand>
        <name>S-adenosyl-L-methionine</name>
        <dbReference type="ChEBI" id="CHEBI:59789"/>
    </ligand>
</feature>
<feature type="binding site" evidence="1">
    <location>
        <position position="111"/>
    </location>
    <ligand>
        <name>S-adenosyl-L-methionine</name>
        <dbReference type="ChEBI" id="CHEBI:59789"/>
    </ligand>
</feature>
<feature type="binding site" evidence="1">
    <location>
        <position position="112"/>
    </location>
    <ligand>
        <name>S-adenosyl-L-methionine</name>
        <dbReference type="ChEBI" id="CHEBI:59789"/>
    </ligand>
</feature>
<reference key="1">
    <citation type="submission" date="2007-04" db="EMBL/GenBank/DDBJ databases">
        <title>Complete sequence of Pyrobaculum arsenaticum DSM 13514.</title>
        <authorList>
            <consortium name="US DOE Joint Genome Institute"/>
            <person name="Copeland A."/>
            <person name="Lucas S."/>
            <person name="Lapidus A."/>
            <person name="Barry K."/>
            <person name="Glavina del Rio T."/>
            <person name="Dalin E."/>
            <person name="Tice H."/>
            <person name="Pitluck S."/>
            <person name="Chain P."/>
            <person name="Malfatti S."/>
            <person name="Shin M."/>
            <person name="Vergez L."/>
            <person name="Schmutz J."/>
            <person name="Larimer F."/>
            <person name="Land M."/>
            <person name="Hauser L."/>
            <person name="Kyrpides N."/>
            <person name="Mikhailova N."/>
            <person name="Cozen A.E."/>
            <person name="Fitz-Gibbon S.T."/>
            <person name="House C.H."/>
            <person name="Saltikov C."/>
            <person name="Lowe T.M."/>
            <person name="Richardson P."/>
        </authorList>
    </citation>
    <scope>NUCLEOTIDE SEQUENCE [LARGE SCALE GENOMIC DNA]</scope>
    <source>
        <strain>ATCC 700994 / DSM 13514 / JCM 11321 / PZ6</strain>
    </source>
</reference>
<accession>A4WMB7</accession>
<sequence>MSRIVLRREGTVEFYAPDPRAYGSIYSAPVFYNPAMEKNRTLSVLFLKAYGATGLTVCEPLSGTGVRGIRYAVETGAVGRLILNDISREAVELIKKNLEVNGVDAEVYNEDANVLLHRLRDKCDVVDIDPFGSPAPFLQAGFRALREEGVICVTATDTAVLVGRYPKKCLRRYGAVMFKTPFYIEAGLRNLTGYVARVAASEDYGFEPLFAYWEGHYFRLCARAVRGARDADSNFNFIGYVEYKKPSRKVVRRPGERSLGPLWVGPMGDPILVNKMAEYGPYGDFLQLLSEEYSVAAPWFFKVPEFALGGVSRGIEEALNALKKGGIYAVRTHMAPDGFKTEVSAGEVERVLRIVI</sequence>
<name>TRM1_PYRAR</name>
<evidence type="ECO:0000255" key="1">
    <source>
        <dbReference type="HAMAP-Rule" id="MF_00290"/>
    </source>
</evidence>
<organism>
    <name type="scientific">Pyrobaculum arsenaticum (strain DSM 13514 / JCM 11321 / PZ6)</name>
    <dbReference type="NCBI Taxonomy" id="340102"/>
    <lineage>
        <taxon>Archaea</taxon>
        <taxon>Thermoproteota</taxon>
        <taxon>Thermoprotei</taxon>
        <taxon>Thermoproteales</taxon>
        <taxon>Thermoproteaceae</taxon>
        <taxon>Pyrobaculum</taxon>
    </lineage>
</organism>
<proteinExistence type="inferred from homology"/>